<evidence type="ECO:0000255" key="1">
    <source>
        <dbReference type="HAMAP-Rule" id="MF_00388"/>
    </source>
</evidence>
<proteinExistence type="inferred from homology"/>
<protein>
    <recommendedName>
        <fullName evidence="1">UDP-3-O-acyl-N-acetylglucosamine deacetylase</fullName>
        <shortName evidence="1">UDP-3-O-acyl-GlcNAc deacetylase</shortName>
        <ecNumber evidence="1">3.5.1.108</ecNumber>
    </recommendedName>
    <alternativeName>
        <fullName evidence="1">UDP-3-O-[R-3-hydroxymyristoyl]-N-acetylglucosamine deacetylase</fullName>
    </alternativeName>
</protein>
<organism>
    <name type="scientific">Erwinia tasmaniensis (strain DSM 17950 / CFBP 7177 / CIP 109463 / NCPPB 4357 / Et1/99)</name>
    <dbReference type="NCBI Taxonomy" id="465817"/>
    <lineage>
        <taxon>Bacteria</taxon>
        <taxon>Pseudomonadati</taxon>
        <taxon>Pseudomonadota</taxon>
        <taxon>Gammaproteobacteria</taxon>
        <taxon>Enterobacterales</taxon>
        <taxon>Erwiniaceae</taxon>
        <taxon>Erwinia</taxon>
    </lineage>
</organism>
<sequence>MIKQRTLKRIVQTTGVGLHTGKKVTLTLRPASANTGVIYRRTDLNPPVDFPADAKSVRDTMLCTCLVNEHDVRISTVEHLNAALAGLGIDNIVVEVNAPEIPIMDGSAAPFIYLLMDAGIEELNSAKKFVRIKQPVRVEDGDKWAELSPHNGFSLDFTIDFNHPAIDASTQRYRMDFSAEAFARQISRARTFGFMRDIEALQSRGLALGGSFDCAIVVDDYRVLNEDGLRFEDEFVRHKMLDAIGDLYMCGNNIIGAFTAYKSGHALNNKLLQAVLAKQEAWEWATFEDEATLPVTFRAPNLVLA</sequence>
<gene>
    <name evidence="1" type="primary">lpxC</name>
    <name type="ordered locus">ETA_07610</name>
</gene>
<dbReference type="EC" id="3.5.1.108" evidence="1"/>
<dbReference type="EMBL" id="CU468135">
    <property type="protein sequence ID" value="CAO95807.1"/>
    <property type="molecule type" value="Genomic_DNA"/>
</dbReference>
<dbReference type="RefSeq" id="WP_012440509.1">
    <property type="nucleotide sequence ID" value="NC_010694.1"/>
</dbReference>
<dbReference type="SMR" id="B2VD67"/>
<dbReference type="STRING" id="465817.ETA_07610"/>
<dbReference type="KEGG" id="eta:ETA_07610"/>
<dbReference type="eggNOG" id="COG0774">
    <property type="taxonomic scope" value="Bacteria"/>
</dbReference>
<dbReference type="HOGENOM" id="CLU_046528_1_0_6"/>
<dbReference type="OrthoDB" id="9802746at2"/>
<dbReference type="UniPathway" id="UPA00359">
    <property type="reaction ID" value="UER00478"/>
</dbReference>
<dbReference type="Proteomes" id="UP000001726">
    <property type="component" value="Chromosome"/>
</dbReference>
<dbReference type="GO" id="GO:0016020">
    <property type="term" value="C:membrane"/>
    <property type="evidence" value="ECO:0007669"/>
    <property type="project" value="GOC"/>
</dbReference>
<dbReference type="GO" id="GO:0046872">
    <property type="term" value="F:metal ion binding"/>
    <property type="evidence" value="ECO:0007669"/>
    <property type="project" value="UniProtKB-KW"/>
</dbReference>
<dbReference type="GO" id="GO:0103117">
    <property type="term" value="F:UDP-3-O-acyl-N-acetylglucosamine deacetylase activity"/>
    <property type="evidence" value="ECO:0007669"/>
    <property type="project" value="UniProtKB-UniRule"/>
</dbReference>
<dbReference type="GO" id="GO:0009245">
    <property type="term" value="P:lipid A biosynthetic process"/>
    <property type="evidence" value="ECO:0007669"/>
    <property type="project" value="UniProtKB-UniRule"/>
</dbReference>
<dbReference type="FunFam" id="3.30.1700.10:FF:000001">
    <property type="entry name" value="UDP-3-O-acyl-N-acetylglucosamine deacetylase"/>
    <property type="match status" value="1"/>
</dbReference>
<dbReference type="FunFam" id="3.30.230.20:FF:000001">
    <property type="entry name" value="UDP-3-O-acyl-N-acetylglucosamine deacetylase"/>
    <property type="match status" value="1"/>
</dbReference>
<dbReference type="Gene3D" id="3.30.230.20">
    <property type="entry name" value="lpxc deacetylase, domain 1"/>
    <property type="match status" value="1"/>
</dbReference>
<dbReference type="Gene3D" id="3.30.1700.10">
    <property type="entry name" value="lpxc deacetylase, domain 2"/>
    <property type="match status" value="1"/>
</dbReference>
<dbReference type="HAMAP" id="MF_00388">
    <property type="entry name" value="LpxC"/>
    <property type="match status" value="1"/>
</dbReference>
<dbReference type="InterPro" id="IPR020568">
    <property type="entry name" value="Ribosomal_Su5_D2-typ_SF"/>
</dbReference>
<dbReference type="InterPro" id="IPR004463">
    <property type="entry name" value="UDP-acyl_GlcNac_deAcase"/>
</dbReference>
<dbReference type="InterPro" id="IPR011334">
    <property type="entry name" value="UDP-acyl_GlcNac_deAcase_C"/>
</dbReference>
<dbReference type="InterPro" id="IPR015870">
    <property type="entry name" value="UDP-acyl_N-AcGlcN_deAcase_N"/>
</dbReference>
<dbReference type="NCBIfam" id="TIGR00325">
    <property type="entry name" value="lpxC"/>
    <property type="match status" value="1"/>
</dbReference>
<dbReference type="PANTHER" id="PTHR33694">
    <property type="entry name" value="UDP-3-O-ACYL-N-ACETYLGLUCOSAMINE DEACETYLASE 1, MITOCHONDRIAL-RELATED"/>
    <property type="match status" value="1"/>
</dbReference>
<dbReference type="PANTHER" id="PTHR33694:SF1">
    <property type="entry name" value="UDP-3-O-ACYL-N-ACETYLGLUCOSAMINE DEACETYLASE 1, MITOCHONDRIAL-RELATED"/>
    <property type="match status" value="1"/>
</dbReference>
<dbReference type="Pfam" id="PF03331">
    <property type="entry name" value="LpxC"/>
    <property type="match status" value="1"/>
</dbReference>
<dbReference type="SUPFAM" id="SSF54211">
    <property type="entry name" value="Ribosomal protein S5 domain 2-like"/>
    <property type="match status" value="2"/>
</dbReference>
<comment type="function">
    <text evidence="1">Catalyzes the hydrolysis of UDP-3-O-myristoyl-N-acetylglucosamine to form UDP-3-O-myristoylglucosamine and acetate, the committed step in lipid A biosynthesis.</text>
</comment>
<comment type="catalytic activity">
    <reaction evidence="1">
        <text>a UDP-3-O-[(3R)-3-hydroxyacyl]-N-acetyl-alpha-D-glucosamine + H2O = a UDP-3-O-[(3R)-3-hydroxyacyl]-alpha-D-glucosamine + acetate</text>
        <dbReference type="Rhea" id="RHEA:67816"/>
        <dbReference type="ChEBI" id="CHEBI:15377"/>
        <dbReference type="ChEBI" id="CHEBI:30089"/>
        <dbReference type="ChEBI" id="CHEBI:137740"/>
        <dbReference type="ChEBI" id="CHEBI:173225"/>
        <dbReference type="EC" id="3.5.1.108"/>
    </reaction>
</comment>
<comment type="cofactor">
    <cofactor evidence="1">
        <name>Zn(2+)</name>
        <dbReference type="ChEBI" id="CHEBI:29105"/>
    </cofactor>
</comment>
<comment type="pathway">
    <text evidence="1">Glycolipid biosynthesis; lipid IV(A) biosynthesis; lipid IV(A) from (3R)-3-hydroxytetradecanoyl-[acyl-carrier-protein] and UDP-N-acetyl-alpha-D-glucosamine: step 2/6.</text>
</comment>
<comment type="similarity">
    <text evidence="1">Belongs to the LpxC family.</text>
</comment>
<keyword id="KW-0378">Hydrolase</keyword>
<keyword id="KW-0441">Lipid A biosynthesis</keyword>
<keyword id="KW-0444">Lipid biosynthesis</keyword>
<keyword id="KW-0443">Lipid metabolism</keyword>
<keyword id="KW-0479">Metal-binding</keyword>
<keyword id="KW-1185">Reference proteome</keyword>
<keyword id="KW-0862">Zinc</keyword>
<reference key="1">
    <citation type="journal article" date="2008" name="Environ. Microbiol.">
        <title>The genome of Erwinia tasmaniensis strain Et1/99, a non-pathogenic bacterium in the genus Erwinia.</title>
        <authorList>
            <person name="Kube M."/>
            <person name="Migdoll A.M."/>
            <person name="Mueller I."/>
            <person name="Kuhl H."/>
            <person name="Beck A."/>
            <person name="Reinhardt R."/>
            <person name="Geider K."/>
        </authorList>
    </citation>
    <scope>NUCLEOTIDE SEQUENCE [LARGE SCALE GENOMIC DNA]</scope>
    <source>
        <strain>DSM 17950 / CFBP 7177 / CIP 109463 / NCPPB 4357 / Et1/99</strain>
    </source>
</reference>
<name>LPXC_ERWT9</name>
<feature type="chain" id="PRO_1000122787" description="UDP-3-O-acyl-N-acetylglucosamine deacetylase">
    <location>
        <begin position="1"/>
        <end position="305"/>
    </location>
</feature>
<feature type="active site" description="Proton donor" evidence="1">
    <location>
        <position position="265"/>
    </location>
</feature>
<feature type="binding site" evidence="1">
    <location>
        <position position="79"/>
    </location>
    <ligand>
        <name>Zn(2+)</name>
        <dbReference type="ChEBI" id="CHEBI:29105"/>
    </ligand>
</feature>
<feature type="binding site" evidence="1">
    <location>
        <position position="238"/>
    </location>
    <ligand>
        <name>Zn(2+)</name>
        <dbReference type="ChEBI" id="CHEBI:29105"/>
    </ligand>
</feature>
<feature type="binding site" evidence="1">
    <location>
        <position position="242"/>
    </location>
    <ligand>
        <name>Zn(2+)</name>
        <dbReference type="ChEBI" id="CHEBI:29105"/>
    </ligand>
</feature>
<accession>B2VD67</accession>